<evidence type="ECO:0000255" key="1">
    <source>
        <dbReference type="HAMAP-Rule" id="MF_00004"/>
    </source>
</evidence>
<protein>
    <recommendedName>
        <fullName evidence="1">Adenine phosphoribosyltransferase</fullName>
        <shortName evidence="1">APRT</shortName>
        <ecNumber evidence="1">2.4.2.7</ecNumber>
    </recommendedName>
</protein>
<proteinExistence type="inferred from homology"/>
<name>APT_CLOBL</name>
<feature type="chain" id="PRO_0000329341" description="Adenine phosphoribosyltransferase">
    <location>
        <begin position="1"/>
        <end position="172"/>
    </location>
</feature>
<dbReference type="EC" id="2.4.2.7" evidence="1"/>
<dbReference type="EMBL" id="CP000728">
    <property type="protein sequence ID" value="ABS41937.1"/>
    <property type="molecule type" value="Genomic_DNA"/>
</dbReference>
<dbReference type="RefSeq" id="WP_003357763.1">
    <property type="nucleotide sequence ID" value="NC_009699.1"/>
</dbReference>
<dbReference type="SMR" id="A7GHS8"/>
<dbReference type="KEGG" id="cbf:CLI_3119"/>
<dbReference type="HOGENOM" id="CLU_063339_3_0_9"/>
<dbReference type="UniPathway" id="UPA00588">
    <property type="reaction ID" value="UER00646"/>
</dbReference>
<dbReference type="Proteomes" id="UP000002410">
    <property type="component" value="Chromosome"/>
</dbReference>
<dbReference type="GO" id="GO:0005737">
    <property type="term" value="C:cytoplasm"/>
    <property type="evidence" value="ECO:0007669"/>
    <property type="project" value="UniProtKB-SubCell"/>
</dbReference>
<dbReference type="GO" id="GO:0002055">
    <property type="term" value="F:adenine binding"/>
    <property type="evidence" value="ECO:0007669"/>
    <property type="project" value="TreeGrafter"/>
</dbReference>
<dbReference type="GO" id="GO:0003999">
    <property type="term" value="F:adenine phosphoribosyltransferase activity"/>
    <property type="evidence" value="ECO:0007669"/>
    <property type="project" value="UniProtKB-UniRule"/>
</dbReference>
<dbReference type="GO" id="GO:0016208">
    <property type="term" value="F:AMP binding"/>
    <property type="evidence" value="ECO:0007669"/>
    <property type="project" value="TreeGrafter"/>
</dbReference>
<dbReference type="GO" id="GO:0006168">
    <property type="term" value="P:adenine salvage"/>
    <property type="evidence" value="ECO:0007669"/>
    <property type="project" value="InterPro"/>
</dbReference>
<dbReference type="GO" id="GO:0044209">
    <property type="term" value="P:AMP salvage"/>
    <property type="evidence" value="ECO:0007669"/>
    <property type="project" value="UniProtKB-UniRule"/>
</dbReference>
<dbReference type="GO" id="GO:0006166">
    <property type="term" value="P:purine ribonucleoside salvage"/>
    <property type="evidence" value="ECO:0007669"/>
    <property type="project" value="UniProtKB-KW"/>
</dbReference>
<dbReference type="CDD" id="cd06223">
    <property type="entry name" value="PRTases_typeI"/>
    <property type="match status" value="1"/>
</dbReference>
<dbReference type="FunFam" id="3.40.50.2020:FF:000004">
    <property type="entry name" value="Adenine phosphoribosyltransferase"/>
    <property type="match status" value="1"/>
</dbReference>
<dbReference type="Gene3D" id="3.40.50.2020">
    <property type="match status" value="1"/>
</dbReference>
<dbReference type="HAMAP" id="MF_00004">
    <property type="entry name" value="Aden_phosphoribosyltr"/>
    <property type="match status" value="1"/>
</dbReference>
<dbReference type="InterPro" id="IPR005764">
    <property type="entry name" value="Ade_phspho_trans"/>
</dbReference>
<dbReference type="InterPro" id="IPR000836">
    <property type="entry name" value="PRibTrfase_dom"/>
</dbReference>
<dbReference type="InterPro" id="IPR029057">
    <property type="entry name" value="PRTase-like"/>
</dbReference>
<dbReference type="InterPro" id="IPR050054">
    <property type="entry name" value="UPRTase/APRTase"/>
</dbReference>
<dbReference type="NCBIfam" id="TIGR01090">
    <property type="entry name" value="apt"/>
    <property type="match status" value="1"/>
</dbReference>
<dbReference type="NCBIfam" id="NF002633">
    <property type="entry name" value="PRK02304.1-2"/>
    <property type="match status" value="1"/>
</dbReference>
<dbReference type="NCBIfam" id="NF002634">
    <property type="entry name" value="PRK02304.1-3"/>
    <property type="match status" value="1"/>
</dbReference>
<dbReference type="NCBIfam" id="NF002636">
    <property type="entry name" value="PRK02304.1-5"/>
    <property type="match status" value="1"/>
</dbReference>
<dbReference type="NCBIfam" id="NF009211">
    <property type="entry name" value="PRK12560.1"/>
    <property type="match status" value="1"/>
</dbReference>
<dbReference type="PANTHER" id="PTHR32315">
    <property type="entry name" value="ADENINE PHOSPHORIBOSYLTRANSFERASE"/>
    <property type="match status" value="1"/>
</dbReference>
<dbReference type="PANTHER" id="PTHR32315:SF3">
    <property type="entry name" value="ADENINE PHOSPHORIBOSYLTRANSFERASE"/>
    <property type="match status" value="1"/>
</dbReference>
<dbReference type="Pfam" id="PF00156">
    <property type="entry name" value="Pribosyltran"/>
    <property type="match status" value="1"/>
</dbReference>
<dbReference type="SUPFAM" id="SSF53271">
    <property type="entry name" value="PRTase-like"/>
    <property type="match status" value="1"/>
</dbReference>
<accession>A7GHS8</accession>
<comment type="function">
    <text evidence="1">Catalyzes a salvage reaction resulting in the formation of AMP, that is energically less costly than de novo synthesis.</text>
</comment>
<comment type="catalytic activity">
    <reaction evidence="1">
        <text>AMP + diphosphate = 5-phospho-alpha-D-ribose 1-diphosphate + adenine</text>
        <dbReference type="Rhea" id="RHEA:16609"/>
        <dbReference type="ChEBI" id="CHEBI:16708"/>
        <dbReference type="ChEBI" id="CHEBI:33019"/>
        <dbReference type="ChEBI" id="CHEBI:58017"/>
        <dbReference type="ChEBI" id="CHEBI:456215"/>
        <dbReference type="EC" id="2.4.2.7"/>
    </reaction>
</comment>
<comment type="pathway">
    <text evidence="1">Purine metabolism; AMP biosynthesis via salvage pathway; AMP from adenine: step 1/1.</text>
</comment>
<comment type="subunit">
    <text evidence="1">Homodimer.</text>
</comment>
<comment type="subcellular location">
    <subcellularLocation>
        <location evidence="1">Cytoplasm</location>
    </subcellularLocation>
</comment>
<comment type="similarity">
    <text evidence="1">Belongs to the purine/pyrimidine phosphoribosyltransferase family.</text>
</comment>
<gene>
    <name evidence="1" type="primary">apt</name>
    <name type="ordered locus">CLI_3119</name>
</gene>
<keyword id="KW-0963">Cytoplasm</keyword>
<keyword id="KW-0328">Glycosyltransferase</keyword>
<keyword id="KW-0660">Purine salvage</keyword>
<keyword id="KW-0808">Transferase</keyword>
<sequence>MNLKEHIRVIENFPKEGISFKDVTTILQDGKVLNYTIDKLAENLKDKKIDKIVGPEARGFLFGTPLAYKLGVGFVPVRKKGKLPYETISCKYDLEYGQDELQIHKDSIKKGDKVAIVDDLLATGGTIASVVKLVEELGGEVVNVSFVIELTDLKGKDKLEGYDINSLVQYNI</sequence>
<organism>
    <name type="scientific">Clostridium botulinum (strain Langeland / NCTC 10281 / Type F)</name>
    <dbReference type="NCBI Taxonomy" id="441772"/>
    <lineage>
        <taxon>Bacteria</taxon>
        <taxon>Bacillati</taxon>
        <taxon>Bacillota</taxon>
        <taxon>Clostridia</taxon>
        <taxon>Eubacteriales</taxon>
        <taxon>Clostridiaceae</taxon>
        <taxon>Clostridium</taxon>
    </lineage>
</organism>
<reference key="1">
    <citation type="submission" date="2007-06" db="EMBL/GenBank/DDBJ databases">
        <authorList>
            <person name="Brinkac L.M."/>
            <person name="Daugherty S."/>
            <person name="Dodson R.J."/>
            <person name="Madupu R."/>
            <person name="Brown J.L."/>
            <person name="Bruce D."/>
            <person name="Detter C."/>
            <person name="Munk C."/>
            <person name="Smith L.A."/>
            <person name="Smith T.J."/>
            <person name="White O."/>
            <person name="Brettin T.S."/>
        </authorList>
    </citation>
    <scope>NUCLEOTIDE SEQUENCE [LARGE SCALE GENOMIC DNA]</scope>
    <source>
        <strain>Langeland / NCTC 10281 / Type F</strain>
    </source>
</reference>